<reference key="1">
    <citation type="submission" date="2006-08" db="EMBL/GenBank/DDBJ databases">
        <title>Complete sequence of Maricaulis maris MCS10.</title>
        <authorList>
            <consortium name="US DOE Joint Genome Institute"/>
            <person name="Copeland A."/>
            <person name="Lucas S."/>
            <person name="Lapidus A."/>
            <person name="Barry K."/>
            <person name="Detter J.C."/>
            <person name="Glavina del Rio T."/>
            <person name="Hammon N."/>
            <person name="Israni S."/>
            <person name="Dalin E."/>
            <person name="Tice H."/>
            <person name="Pitluck S."/>
            <person name="Saunders E."/>
            <person name="Brettin T."/>
            <person name="Bruce D."/>
            <person name="Han C."/>
            <person name="Tapia R."/>
            <person name="Gilna P."/>
            <person name="Schmutz J."/>
            <person name="Larimer F."/>
            <person name="Land M."/>
            <person name="Hauser L."/>
            <person name="Kyrpides N."/>
            <person name="Mikhailova N."/>
            <person name="Viollier P."/>
            <person name="Stephens C."/>
            <person name="Richardson P."/>
        </authorList>
    </citation>
    <scope>NUCLEOTIDE SEQUENCE [LARGE SCALE GENOMIC DNA]</scope>
    <source>
        <strain>MCS10</strain>
    </source>
</reference>
<accession>Q0ASI7</accession>
<proteinExistence type="inferred from homology"/>
<organism>
    <name type="scientific">Maricaulis maris (strain MCS10)</name>
    <name type="common">Caulobacter maris</name>
    <dbReference type="NCBI Taxonomy" id="394221"/>
    <lineage>
        <taxon>Bacteria</taxon>
        <taxon>Pseudomonadati</taxon>
        <taxon>Pseudomonadota</taxon>
        <taxon>Alphaproteobacteria</taxon>
        <taxon>Maricaulales</taxon>
        <taxon>Maricaulaceae</taxon>
        <taxon>Maricaulis</taxon>
    </lineage>
</organism>
<evidence type="ECO:0000255" key="1">
    <source>
        <dbReference type="HAMAP-Rule" id="MF_00321"/>
    </source>
</evidence>
<keyword id="KW-0131">Cell cycle</keyword>
<keyword id="KW-0132">Cell division</keyword>
<keyword id="KW-0342">GTP-binding</keyword>
<keyword id="KW-0460">Magnesium</keyword>
<keyword id="KW-0479">Metal-binding</keyword>
<keyword id="KW-0547">Nucleotide-binding</keyword>
<keyword id="KW-1185">Reference proteome</keyword>
<keyword id="KW-0717">Septation</keyword>
<sequence length="191" mass="20901">MGAVALDHLPEPDRLEVAFAGRSNVGKSSLINALTNQKGLARASGEPGRTRELNFFNVEGGDLRIVDLPGYGYAKAPKPVVEKWTRLTKAFLRGRVNLKRVYLLIDSRHGLKDVDLKIMDVFDEAAVSYQVVLTKTDKIKPPAVKRLIGETGEKIARRPAAFPRVIATSSAKQDGVDQLRAEIVALLPDMG</sequence>
<protein>
    <recommendedName>
        <fullName evidence="1">Probable GTP-binding protein EngB</fullName>
    </recommendedName>
</protein>
<comment type="function">
    <text evidence="1">Necessary for normal cell division and for the maintenance of normal septation.</text>
</comment>
<comment type="cofactor">
    <cofactor evidence="1">
        <name>Mg(2+)</name>
        <dbReference type="ChEBI" id="CHEBI:18420"/>
    </cofactor>
</comment>
<comment type="similarity">
    <text evidence="1">Belongs to the TRAFAC class TrmE-Era-EngA-EngB-Septin-like GTPase superfamily. EngB GTPase family.</text>
</comment>
<feature type="chain" id="PRO_0000266888" description="Probable GTP-binding protein EngB">
    <location>
        <begin position="1"/>
        <end position="191"/>
    </location>
</feature>
<feature type="domain" description="EngB-type G" evidence="1">
    <location>
        <begin position="13"/>
        <end position="189"/>
    </location>
</feature>
<feature type="binding site" evidence="1">
    <location>
        <begin position="21"/>
        <end position="28"/>
    </location>
    <ligand>
        <name>GTP</name>
        <dbReference type="ChEBI" id="CHEBI:37565"/>
    </ligand>
</feature>
<feature type="binding site" evidence="1">
    <location>
        <position position="28"/>
    </location>
    <ligand>
        <name>Mg(2+)</name>
        <dbReference type="ChEBI" id="CHEBI:18420"/>
    </ligand>
</feature>
<feature type="binding site" evidence="1">
    <location>
        <begin position="48"/>
        <end position="52"/>
    </location>
    <ligand>
        <name>GTP</name>
        <dbReference type="ChEBI" id="CHEBI:37565"/>
    </ligand>
</feature>
<feature type="binding site" evidence="1">
    <location>
        <position position="50"/>
    </location>
    <ligand>
        <name>Mg(2+)</name>
        <dbReference type="ChEBI" id="CHEBI:18420"/>
    </ligand>
</feature>
<feature type="binding site" evidence="1">
    <location>
        <begin position="67"/>
        <end position="70"/>
    </location>
    <ligand>
        <name>GTP</name>
        <dbReference type="ChEBI" id="CHEBI:37565"/>
    </ligand>
</feature>
<feature type="binding site" evidence="1">
    <location>
        <begin position="134"/>
        <end position="137"/>
    </location>
    <ligand>
        <name>GTP</name>
        <dbReference type="ChEBI" id="CHEBI:37565"/>
    </ligand>
</feature>
<feature type="binding site" evidence="1">
    <location>
        <begin position="168"/>
        <end position="170"/>
    </location>
    <ligand>
        <name>GTP</name>
        <dbReference type="ChEBI" id="CHEBI:37565"/>
    </ligand>
</feature>
<dbReference type="EMBL" id="CP000449">
    <property type="protein sequence ID" value="ABI64750.1"/>
    <property type="molecule type" value="Genomic_DNA"/>
</dbReference>
<dbReference type="RefSeq" id="WP_011642397.1">
    <property type="nucleotide sequence ID" value="NC_008347.1"/>
</dbReference>
<dbReference type="SMR" id="Q0ASI7"/>
<dbReference type="STRING" id="394221.Mmar10_0457"/>
<dbReference type="KEGG" id="mmr:Mmar10_0457"/>
<dbReference type="eggNOG" id="COG0218">
    <property type="taxonomic scope" value="Bacteria"/>
</dbReference>
<dbReference type="HOGENOM" id="CLU_033732_2_0_5"/>
<dbReference type="Proteomes" id="UP000001964">
    <property type="component" value="Chromosome"/>
</dbReference>
<dbReference type="GO" id="GO:0005829">
    <property type="term" value="C:cytosol"/>
    <property type="evidence" value="ECO:0007669"/>
    <property type="project" value="TreeGrafter"/>
</dbReference>
<dbReference type="GO" id="GO:0005525">
    <property type="term" value="F:GTP binding"/>
    <property type="evidence" value="ECO:0007669"/>
    <property type="project" value="UniProtKB-UniRule"/>
</dbReference>
<dbReference type="GO" id="GO:0046872">
    <property type="term" value="F:metal ion binding"/>
    <property type="evidence" value="ECO:0007669"/>
    <property type="project" value="UniProtKB-KW"/>
</dbReference>
<dbReference type="GO" id="GO:0000917">
    <property type="term" value="P:division septum assembly"/>
    <property type="evidence" value="ECO:0007669"/>
    <property type="project" value="UniProtKB-KW"/>
</dbReference>
<dbReference type="CDD" id="cd01876">
    <property type="entry name" value="YihA_EngB"/>
    <property type="match status" value="1"/>
</dbReference>
<dbReference type="Gene3D" id="3.40.50.300">
    <property type="entry name" value="P-loop containing nucleotide triphosphate hydrolases"/>
    <property type="match status" value="1"/>
</dbReference>
<dbReference type="HAMAP" id="MF_00321">
    <property type="entry name" value="GTPase_EngB"/>
    <property type="match status" value="1"/>
</dbReference>
<dbReference type="InterPro" id="IPR030393">
    <property type="entry name" value="G_ENGB_dom"/>
</dbReference>
<dbReference type="InterPro" id="IPR006073">
    <property type="entry name" value="GTP-bd"/>
</dbReference>
<dbReference type="InterPro" id="IPR019987">
    <property type="entry name" value="GTP-bd_ribosome_bio_YsxC"/>
</dbReference>
<dbReference type="InterPro" id="IPR027417">
    <property type="entry name" value="P-loop_NTPase"/>
</dbReference>
<dbReference type="NCBIfam" id="TIGR03598">
    <property type="entry name" value="GTPase_YsxC"/>
    <property type="match status" value="1"/>
</dbReference>
<dbReference type="PANTHER" id="PTHR11649:SF13">
    <property type="entry name" value="ENGB-TYPE G DOMAIN-CONTAINING PROTEIN"/>
    <property type="match status" value="1"/>
</dbReference>
<dbReference type="PANTHER" id="PTHR11649">
    <property type="entry name" value="MSS1/TRME-RELATED GTP-BINDING PROTEIN"/>
    <property type="match status" value="1"/>
</dbReference>
<dbReference type="Pfam" id="PF01926">
    <property type="entry name" value="MMR_HSR1"/>
    <property type="match status" value="1"/>
</dbReference>
<dbReference type="SUPFAM" id="SSF52540">
    <property type="entry name" value="P-loop containing nucleoside triphosphate hydrolases"/>
    <property type="match status" value="1"/>
</dbReference>
<dbReference type="PROSITE" id="PS51706">
    <property type="entry name" value="G_ENGB"/>
    <property type="match status" value="1"/>
</dbReference>
<name>ENGB_MARMM</name>
<gene>
    <name evidence="1" type="primary">engB</name>
    <name type="ordered locus">Mmar10_0457</name>
</gene>